<feature type="chain" id="PRO_0000442626" description="Atromentin synthetase nps3">
    <location>
        <begin position="1"/>
        <end position="962"/>
    </location>
</feature>
<feature type="domain" description="Carrier" evidence="2">
    <location>
        <begin position="601"/>
        <end position="679"/>
    </location>
</feature>
<feature type="region of interest" description="Adenylation (A) domain" evidence="1">
    <location>
        <begin position="55"/>
        <end position="469"/>
    </location>
</feature>
<feature type="region of interest" description="Thiolation and peptide carrier (T) domain" evidence="1">
    <location>
        <begin position="606"/>
        <end position="676"/>
    </location>
</feature>
<feature type="region of interest" description="Thioesterase (TE) domain" evidence="1">
    <location>
        <begin position="702"/>
        <end position="805"/>
    </location>
</feature>
<feature type="modified residue" description="O-(pantetheine 4'-phosphoryl)serine" evidence="2">
    <location>
        <position position="638"/>
    </location>
</feature>
<keyword id="KW-0596">Phosphopantetheine</keyword>
<keyword id="KW-0597">Phosphoprotein</keyword>
<keyword id="KW-0808">Transferase</keyword>
<accession>F8P1W3</accession>
<reference key="1">
    <citation type="journal article" date="2011" name="Science">
        <title>The plant cell wall-decomposing machinery underlies the functional diversity of forest fungi.</title>
        <authorList>
            <person name="Eastwood D.C."/>
            <person name="Floudas D."/>
            <person name="Binder M."/>
            <person name="Majcherczyk A."/>
            <person name="Schneider P."/>
            <person name="Aerts A."/>
            <person name="Asiegbu F.O."/>
            <person name="Baker S.E."/>
            <person name="Barry K."/>
            <person name="Bendiksby M."/>
            <person name="Blumentritt M."/>
            <person name="Coutinho P.M."/>
            <person name="Cullen D."/>
            <person name="de Vries R.P."/>
            <person name="Gathman A."/>
            <person name="Goodell B."/>
            <person name="Henrissat B."/>
            <person name="Ihrmark K."/>
            <person name="Kauserud H."/>
            <person name="Kohler A."/>
            <person name="LaButti K."/>
            <person name="Lapidus A."/>
            <person name="Lavin J.L."/>
            <person name="Lee Y.-H."/>
            <person name="Lindquist E."/>
            <person name="Lilly W."/>
            <person name="Lucas S."/>
            <person name="Morin E."/>
            <person name="Murat C."/>
            <person name="Oguiza J.A."/>
            <person name="Park J."/>
            <person name="Pisabarro A.G."/>
            <person name="Riley R."/>
            <person name="Rosling A."/>
            <person name="Salamov A."/>
            <person name="Schmidt O."/>
            <person name="Schmutz J."/>
            <person name="Skrede I."/>
            <person name="Stenlid J."/>
            <person name="Wiebenga A."/>
            <person name="Xie X."/>
            <person name="Kuees U."/>
            <person name="Hibbett D.S."/>
            <person name="Hoffmeister D."/>
            <person name="Hoegberg N."/>
            <person name="Martin F."/>
            <person name="Grigoriev I.V."/>
            <person name="Watkinson S.C."/>
        </authorList>
    </citation>
    <scope>NUCLEOTIDE SEQUENCE [LARGE SCALE GENOMIC DNA]</scope>
    <source>
        <strain>S7.9</strain>
    </source>
</reference>
<reference key="2">
    <citation type="journal article" date="2016" name="Environ. Microbiol.">
        <title>Bacteria induce pigment formation in the basidiomycete Serpula lacrymans.</title>
        <authorList>
            <person name="Tauber J.P."/>
            <person name="Schroeckh V."/>
            <person name="Shelest E."/>
            <person name="Brakhage A.A."/>
            <person name="Hoffmeister D."/>
        </authorList>
    </citation>
    <scope>FUNCTION</scope>
    <scope>INDUCTION</scope>
</reference>
<gene>
    <name type="primary">nps3</name>
    <name type="ORF">SERLADRAFT_416588</name>
</gene>
<name>NPS3_SERL9</name>
<proteinExistence type="evidence at transcript level"/>
<protein>
    <recommendedName>
        <fullName>Atromentin synthetase nps3</fullName>
        <ecNumber>2.3.1.-</ecNumber>
    </recommendedName>
    <alternativeName>
        <fullName>Nonribosomal peptide synthase-like enzyme 3</fullName>
        <shortName>NRPS-like</shortName>
    </alternativeName>
</protein>
<evidence type="ECO:0000255" key="1"/>
<evidence type="ECO:0000255" key="2">
    <source>
        <dbReference type="PROSITE-ProRule" id="PRU00258"/>
    </source>
</evidence>
<evidence type="ECO:0000269" key="3">
    <source>
    </source>
</evidence>
<evidence type="ECO:0000305" key="4"/>
<evidence type="ECO:0000305" key="5">
    <source>
    </source>
</evidence>
<dbReference type="EC" id="2.3.1.-"/>
<dbReference type="EMBL" id="GL945436">
    <property type="protein sequence ID" value="EGO23141.1"/>
    <property type="molecule type" value="Genomic_DNA"/>
</dbReference>
<dbReference type="RefSeq" id="XP_007320381.1">
    <property type="nucleotide sequence ID" value="XM_007320319.1"/>
</dbReference>
<dbReference type="SMR" id="F8P1W3"/>
<dbReference type="ESTHER" id="serl9-nps3">
    <property type="family name" value="Thioesterase"/>
</dbReference>
<dbReference type="GeneID" id="18813499"/>
<dbReference type="KEGG" id="sla:SERLADRAFT_416588"/>
<dbReference type="HOGENOM" id="CLU_000022_23_6_1"/>
<dbReference type="OrthoDB" id="288590at2759"/>
<dbReference type="Proteomes" id="UP000008064">
    <property type="component" value="Unassembled WGS sequence"/>
</dbReference>
<dbReference type="GO" id="GO:0031177">
    <property type="term" value="F:phosphopantetheine binding"/>
    <property type="evidence" value="ECO:0007669"/>
    <property type="project" value="InterPro"/>
</dbReference>
<dbReference type="GO" id="GO:0016740">
    <property type="term" value="F:transferase activity"/>
    <property type="evidence" value="ECO:0007669"/>
    <property type="project" value="UniProtKB-KW"/>
</dbReference>
<dbReference type="GO" id="GO:0009058">
    <property type="term" value="P:biosynthetic process"/>
    <property type="evidence" value="ECO:0007669"/>
    <property type="project" value="InterPro"/>
</dbReference>
<dbReference type="Gene3D" id="3.30.300.30">
    <property type="match status" value="1"/>
</dbReference>
<dbReference type="Gene3D" id="1.10.1200.10">
    <property type="entry name" value="ACP-like"/>
    <property type="match status" value="1"/>
</dbReference>
<dbReference type="Gene3D" id="3.40.50.1820">
    <property type="entry name" value="alpha/beta hydrolase"/>
    <property type="match status" value="1"/>
</dbReference>
<dbReference type="Gene3D" id="3.40.50.12780">
    <property type="entry name" value="N-terminal domain of ligase-like"/>
    <property type="match status" value="1"/>
</dbReference>
<dbReference type="InterPro" id="IPR029058">
    <property type="entry name" value="AB_hydrolase_fold"/>
</dbReference>
<dbReference type="InterPro" id="IPR036736">
    <property type="entry name" value="ACP-like_sf"/>
</dbReference>
<dbReference type="InterPro" id="IPR045851">
    <property type="entry name" value="AMP-bd_C_sf"/>
</dbReference>
<dbReference type="InterPro" id="IPR020845">
    <property type="entry name" value="AMP-binding_CS"/>
</dbReference>
<dbReference type="InterPro" id="IPR000873">
    <property type="entry name" value="AMP-dep_synth/lig_dom"/>
</dbReference>
<dbReference type="InterPro" id="IPR042099">
    <property type="entry name" value="ANL_N_sf"/>
</dbReference>
<dbReference type="InterPro" id="IPR050237">
    <property type="entry name" value="ATP-dep_AMP-bd_enzyme"/>
</dbReference>
<dbReference type="InterPro" id="IPR020806">
    <property type="entry name" value="PKS_PP-bd"/>
</dbReference>
<dbReference type="InterPro" id="IPR020802">
    <property type="entry name" value="PKS_thioesterase"/>
</dbReference>
<dbReference type="InterPro" id="IPR009081">
    <property type="entry name" value="PP-bd_ACP"/>
</dbReference>
<dbReference type="InterPro" id="IPR001031">
    <property type="entry name" value="Thioesterase"/>
</dbReference>
<dbReference type="PANTHER" id="PTHR43767">
    <property type="entry name" value="LONG-CHAIN-FATTY-ACID--COA LIGASE"/>
    <property type="match status" value="1"/>
</dbReference>
<dbReference type="PANTHER" id="PTHR43767:SF10">
    <property type="entry name" value="SURFACTIN SYNTHASE SUBUNIT 1"/>
    <property type="match status" value="1"/>
</dbReference>
<dbReference type="Pfam" id="PF00501">
    <property type="entry name" value="AMP-binding"/>
    <property type="match status" value="1"/>
</dbReference>
<dbReference type="Pfam" id="PF00550">
    <property type="entry name" value="PP-binding"/>
    <property type="match status" value="1"/>
</dbReference>
<dbReference type="Pfam" id="PF00975">
    <property type="entry name" value="Thioesterase"/>
    <property type="match status" value="1"/>
</dbReference>
<dbReference type="SMART" id="SM00823">
    <property type="entry name" value="PKS_PP"/>
    <property type="match status" value="1"/>
</dbReference>
<dbReference type="SMART" id="SM00824">
    <property type="entry name" value="PKS_TE"/>
    <property type="match status" value="1"/>
</dbReference>
<dbReference type="SUPFAM" id="SSF56801">
    <property type="entry name" value="Acetyl-CoA synthetase-like"/>
    <property type="match status" value="1"/>
</dbReference>
<dbReference type="SUPFAM" id="SSF47336">
    <property type="entry name" value="ACP-like"/>
    <property type="match status" value="1"/>
</dbReference>
<dbReference type="SUPFAM" id="SSF53474">
    <property type="entry name" value="alpha/beta-Hydrolases"/>
    <property type="match status" value="1"/>
</dbReference>
<dbReference type="PROSITE" id="PS00455">
    <property type="entry name" value="AMP_BINDING"/>
    <property type="match status" value="1"/>
</dbReference>
<dbReference type="PROSITE" id="PS50075">
    <property type="entry name" value="CARRIER"/>
    <property type="match status" value="1"/>
</dbReference>
<comment type="function">
    <text evidence="3">An L-tyrosine:2-oxoglutarate aminotransferase (probably amt1) and atromentin synthetase nps3 catalyze consecutive steps to turn over L-tyrosine into atromentin, which represents the generic precursor molecule for the entire terphenylquinone and pulvinic acid family of pigments, which are widely distributed secondary metabolites in homobasidiomycetes. The first step catalyzed by the aminotransferase converts L-tyrosine in to 4-hydroxyphenylpyruvate (4-HPP). Adenylation of two 4-HPP monomers by the nps3 adenylation (A) domain, covalent tethering of the monomers as a thioester and oxoester onto the nps3 thiolation (T) and thioesterase (TE) domains, respectively, and symmetric C-C-bond formation between two monomers catalyzed by the nps3 TE domain leads to atromentin. Follow-up products of atromentin in S.lacrymans include atromentic acid, xerocomic acid, isoxerocomic acid and variegatic acid.</text>
</comment>
<comment type="pathway">
    <text evidence="5">Secondary metabolite biosynthesis.</text>
</comment>
<comment type="induction">
    <text evidence="3">Up-regulated upon coincubation of the fungus with the terrestrial bacteria Streptomyces iranensis, Bacillus subtilis or Pseudomonas putida.</text>
</comment>
<comment type="similarity">
    <text evidence="4">Belongs to the ATP-dependent AMP-binding enzyme family.</text>
</comment>
<organism>
    <name type="scientific">Serpula lacrymans var. lacrymans (strain S7.9)</name>
    <name type="common">Dry rot fungus</name>
    <dbReference type="NCBI Taxonomy" id="578457"/>
    <lineage>
        <taxon>Eukaryota</taxon>
        <taxon>Fungi</taxon>
        <taxon>Dikarya</taxon>
        <taxon>Basidiomycota</taxon>
        <taxon>Agaricomycotina</taxon>
        <taxon>Agaricomycetes</taxon>
        <taxon>Agaricomycetidae</taxon>
        <taxon>Boletales</taxon>
        <taxon>Coniophorineae</taxon>
        <taxon>Serpulaceae</taxon>
        <taxon>Serpula</taxon>
    </lineage>
</organism>
<sequence>MAPAPTSVPLVSQPNVISDLKTALAVQGSASDHPRTLHQLLSQAAERYPLQQLGFISSSAHDSSIQTKSYSTFNQHVRNLARALTDWKKPVGSIVVVYLTEHEDNMAAVWACLLAGYIPCLQPALSAQQSHKEGHINHIKNLFLSATWLTNEIGAEQVMSVDGIDIHLFSDLKLAAEGYNVPADWAAVEAKPDDEAILFLTSGSTGFSKAVVHTHRTIIASCYAKGQSYGLTSETNVLNWVGFDHVAGSLEMHITPLLFGSYQLHVHASTILSDPLSFLRLIDDKSINIAFAPNFLLAKLARDLEKRSELYGAFDLSSVKRINSGGEAVVSKTAKIFVTVLKALAKDPSKVSFVVSAGFGMTETCAGCIYDPIDLSVINPMHEFLDLGRPIQGCEMRIVDPEDGITLRPDGESGELQVRGPMVFARYYNNPQATSSSFVEGRWYRTGDIGIIEKGVMRLSGRIKDTVIVHGVSYGIPELETYLQLVEGVTHSFLAAAPYRAPGQETEGFVVFYSPTFDLNEEDASNKLAATHRALRDISVKMITLPPQQIIPIPIDQMEKTTLGKLSRARLLTLFKQGELAKHIARADELLSEARGATFVVPATITETAFAKIFAGVFNLSTDDISAADNFFELGGTSIDVIRLKREGETVFGLPEIPIIQILKHPVLRDLAKYIDALVSKDNTQQEYDPIVPLQLTGNKTPIFFVHPGVGEVLIFVNLAKYFQNERPFYAFRARGFEPGQPFFSKMDEMVSSYAAAMKRTQPKGPYAIAGYSYGGVIAFEVAKRLEAGGDEVKFVGLINIPPHIADRMHEIDWTGGMLNLSYFLGLVSKQDADDLAPTLRPLTRKEQLDVVWKLSPPERLVELQLTPEKLDHWVDIAGSLIECGKDYNPSGSVAVADVFYAIPLRGSKSDWLNNQLKPWSGFSRTEPAFTDVPGRHYTLMDFDHVPQFQKIFRSRLEARGV</sequence>